<evidence type="ECO:0000255" key="1">
    <source>
        <dbReference type="HAMAP-Rule" id="MF_01693"/>
    </source>
</evidence>
<gene>
    <name evidence="1" type="primary">bioF</name>
    <name type="ordered locus">Glov_1662</name>
</gene>
<comment type="function">
    <text evidence="1">Catalyzes the decarboxylative condensation of pimeloyl-[acyl-carrier protein] and L-alanine to produce 8-amino-7-oxononanoate (AON), [acyl-carrier protein], and carbon dioxide.</text>
</comment>
<comment type="catalytic activity">
    <reaction evidence="1">
        <text>6-carboxyhexanoyl-[ACP] + L-alanine + H(+) = (8S)-8-amino-7-oxononanoate + holo-[ACP] + CO2</text>
        <dbReference type="Rhea" id="RHEA:42288"/>
        <dbReference type="Rhea" id="RHEA-COMP:9685"/>
        <dbReference type="Rhea" id="RHEA-COMP:9955"/>
        <dbReference type="ChEBI" id="CHEBI:15378"/>
        <dbReference type="ChEBI" id="CHEBI:16526"/>
        <dbReference type="ChEBI" id="CHEBI:57972"/>
        <dbReference type="ChEBI" id="CHEBI:64479"/>
        <dbReference type="ChEBI" id="CHEBI:78846"/>
        <dbReference type="ChEBI" id="CHEBI:149468"/>
        <dbReference type="EC" id="2.3.1.47"/>
    </reaction>
</comment>
<comment type="cofactor">
    <cofactor evidence="1">
        <name>pyridoxal 5'-phosphate</name>
        <dbReference type="ChEBI" id="CHEBI:597326"/>
    </cofactor>
</comment>
<comment type="pathway">
    <text evidence="1">Cofactor biosynthesis; biotin biosynthesis.</text>
</comment>
<comment type="subunit">
    <text evidence="1">Homodimer.</text>
</comment>
<comment type="similarity">
    <text evidence="1">Belongs to the class-II pyridoxal-phosphate-dependent aminotransferase family. BioF subfamily.</text>
</comment>
<feature type="chain" id="PRO_0000380995" description="8-amino-7-oxononanoate synthase">
    <location>
        <begin position="1"/>
        <end position="391"/>
    </location>
</feature>
<feature type="binding site" evidence="1">
    <location>
        <position position="20"/>
    </location>
    <ligand>
        <name>substrate</name>
    </ligand>
</feature>
<feature type="binding site" evidence="1">
    <location>
        <begin position="106"/>
        <end position="107"/>
    </location>
    <ligand>
        <name>pyridoxal 5'-phosphate</name>
        <dbReference type="ChEBI" id="CHEBI:597326"/>
    </ligand>
</feature>
<feature type="binding site" evidence="1">
    <location>
        <position position="131"/>
    </location>
    <ligand>
        <name>substrate</name>
    </ligand>
</feature>
<feature type="binding site" evidence="1">
    <location>
        <position position="178"/>
    </location>
    <ligand>
        <name>pyridoxal 5'-phosphate</name>
        <dbReference type="ChEBI" id="CHEBI:597326"/>
    </ligand>
</feature>
<feature type="binding site" evidence="1">
    <location>
        <position position="206"/>
    </location>
    <ligand>
        <name>pyridoxal 5'-phosphate</name>
        <dbReference type="ChEBI" id="CHEBI:597326"/>
    </ligand>
</feature>
<feature type="binding site" evidence="1">
    <location>
        <position position="234"/>
    </location>
    <ligand>
        <name>pyridoxal 5'-phosphate</name>
        <dbReference type="ChEBI" id="CHEBI:597326"/>
    </ligand>
</feature>
<feature type="binding site" evidence="1">
    <location>
        <position position="353"/>
    </location>
    <ligand>
        <name>substrate</name>
    </ligand>
</feature>
<feature type="modified residue" description="N6-(pyridoxal phosphate)lysine" evidence="1">
    <location>
        <position position="237"/>
    </location>
</feature>
<reference key="1">
    <citation type="submission" date="2008-05" db="EMBL/GenBank/DDBJ databases">
        <title>Complete sequence of chromosome of Geobacter lovleyi SZ.</title>
        <authorList>
            <consortium name="US DOE Joint Genome Institute"/>
            <person name="Lucas S."/>
            <person name="Copeland A."/>
            <person name="Lapidus A."/>
            <person name="Glavina del Rio T."/>
            <person name="Dalin E."/>
            <person name="Tice H."/>
            <person name="Bruce D."/>
            <person name="Goodwin L."/>
            <person name="Pitluck S."/>
            <person name="Chertkov O."/>
            <person name="Meincke L."/>
            <person name="Brettin T."/>
            <person name="Detter J.C."/>
            <person name="Han C."/>
            <person name="Tapia R."/>
            <person name="Kuske C.R."/>
            <person name="Schmutz J."/>
            <person name="Larimer F."/>
            <person name="Land M."/>
            <person name="Hauser L."/>
            <person name="Kyrpides N."/>
            <person name="Mikhailova N."/>
            <person name="Sung Y."/>
            <person name="Fletcher K.E."/>
            <person name="Ritalahti K.M."/>
            <person name="Loeffler F.E."/>
            <person name="Richardson P."/>
        </authorList>
    </citation>
    <scope>NUCLEOTIDE SEQUENCE [LARGE SCALE GENOMIC DNA]</scope>
    <source>
        <strain>ATCC BAA-1151 / DSM 17278 / SZ</strain>
    </source>
</reference>
<accession>B3EAE0</accession>
<proteinExistence type="inferred from homology"/>
<organism>
    <name type="scientific">Trichlorobacter lovleyi (strain ATCC BAA-1151 / DSM 17278 / SZ)</name>
    <name type="common">Geobacter lovleyi</name>
    <dbReference type="NCBI Taxonomy" id="398767"/>
    <lineage>
        <taxon>Bacteria</taxon>
        <taxon>Pseudomonadati</taxon>
        <taxon>Thermodesulfobacteriota</taxon>
        <taxon>Desulfuromonadia</taxon>
        <taxon>Geobacterales</taxon>
        <taxon>Geobacteraceae</taxon>
        <taxon>Trichlorobacter</taxon>
    </lineage>
</organism>
<dbReference type="EC" id="2.3.1.47" evidence="1"/>
<dbReference type="EMBL" id="CP001089">
    <property type="protein sequence ID" value="ACD95378.1"/>
    <property type="molecule type" value="Genomic_DNA"/>
</dbReference>
<dbReference type="RefSeq" id="WP_012469720.1">
    <property type="nucleotide sequence ID" value="NC_010814.1"/>
</dbReference>
<dbReference type="SMR" id="B3EAE0"/>
<dbReference type="STRING" id="398767.Glov_1662"/>
<dbReference type="KEGG" id="glo:Glov_1662"/>
<dbReference type="eggNOG" id="COG0156">
    <property type="taxonomic scope" value="Bacteria"/>
</dbReference>
<dbReference type="HOGENOM" id="CLU_015846_11_2_7"/>
<dbReference type="OrthoDB" id="9807157at2"/>
<dbReference type="UniPathway" id="UPA00078"/>
<dbReference type="Proteomes" id="UP000002420">
    <property type="component" value="Chromosome"/>
</dbReference>
<dbReference type="GO" id="GO:0008710">
    <property type="term" value="F:8-amino-7-oxononanoate synthase activity"/>
    <property type="evidence" value="ECO:0007669"/>
    <property type="project" value="UniProtKB-EC"/>
</dbReference>
<dbReference type="GO" id="GO:0030170">
    <property type="term" value="F:pyridoxal phosphate binding"/>
    <property type="evidence" value="ECO:0007669"/>
    <property type="project" value="InterPro"/>
</dbReference>
<dbReference type="GO" id="GO:0009102">
    <property type="term" value="P:biotin biosynthetic process"/>
    <property type="evidence" value="ECO:0007669"/>
    <property type="project" value="UniProtKB-UniPathway"/>
</dbReference>
<dbReference type="CDD" id="cd06454">
    <property type="entry name" value="KBL_like"/>
    <property type="match status" value="1"/>
</dbReference>
<dbReference type="Gene3D" id="3.90.1150.10">
    <property type="entry name" value="Aspartate Aminotransferase, domain 1"/>
    <property type="match status" value="1"/>
</dbReference>
<dbReference type="Gene3D" id="3.40.640.10">
    <property type="entry name" value="Type I PLP-dependent aspartate aminotransferase-like (Major domain)"/>
    <property type="match status" value="1"/>
</dbReference>
<dbReference type="HAMAP" id="MF_01693">
    <property type="entry name" value="BioF_aminotrans_2"/>
    <property type="match status" value="1"/>
</dbReference>
<dbReference type="InterPro" id="IPR001917">
    <property type="entry name" value="Aminotrans_II_pyridoxalP_BS"/>
</dbReference>
<dbReference type="InterPro" id="IPR004839">
    <property type="entry name" value="Aminotransferase_I/II_large"/>
</dbReference>
<dbReference type="InterPro" id="IPR050087">
    <property type="entry name" value="AON_synthase_class-II"/>
</dbReference>
<dbReference type="InterPro" id="IPR004723">
    <property type="entry name" value="AONS_Archaea/Proteobacteria"/>
</dbReference>
<dbReference type="InterPro" id="IPR022834">
    <property type="entry name" value="AONS_Proteobacteria"/>
</dbReference>
<dbReference type="InterPro" id="IPR015424">
    <property type="entry name" value="PyrdxlP-dep_Trfase"/>
</dbReference>
<dbReference type="InterPro" id="IPR015421">
    <property type="entry name" value="PyrdxlP-dep_Trfase_major"/>
</dbReference>
<dbReference type="InterPro" id="IPR015422">
    <property type="entry name" value="PyrdxlP-dep_Trfase_small"/>
</dbReference>
<dbReference type="NCBIfam" id="TIGR00858">
    <property type="entry name" value="bioF"/>
    <property type="match status" value="1"/>
</dbReference>
<dbReference type="PANTHER" id="PTHR13693:SF100">
    <property type="entry name" value="8-AMINO-7-OXONONANOATE SYNTHASE"/>
    <property type="match status" value="1"/>
</dbReference>
<dbReference type="PANTHER" id="PTHR13693">
    <property type="entry name" value="CLASS II AMINOTRANSFERASE/8-AMINO-7-OXONONANOATE SYNTHASE"/>
    <property type="match status" value="1"/>
</dbReference>
<dbReference type="Pfam" id="PF00155">
    <property type="entry name" value="Aminotran_1_2"/>
    <property type="match status" value="1"/>
</dbReference>
<dbReference type="SUPFAM" id="SSF53383">
    <property type="entry name" value="PLP-dependent transferases"/>
    <property type="match status" value="1"/>
</dbReference>
<dbReference type="PROSITE" id="PS00599">
    <property type="entry name" value="AA_TRANSFER_CLASS_2"/>
    <property type="match status" value="1"/>
</dbReference>
<name>BIOF_TRIL1</name>
<keyword id="KW-0093">Biotin biosynthesis</keyword>
<keyword id="KW-0663">Pyridoxal phosphate</keyword>
<keyword id="KW-1185">Reference proteome</keyword>
<keyword id="KW-0808">Transferase</keyword>
<protein>
    <recommendedName>
        <fullName evidence="1">8-amino-7-oxononanoate synthase</fullName>
        <shortName evidence="1">AONS</shortName>
        <ecNumber evidence="1">2.3.1.47</ecNumber>
    </recommendedName>
    <alternativeName>
        <fullName evidence="1">7-keto-8-amino-pelargonic acid synthase</fullName>
        <shortName evidence="1">7-KAP synthase</shortName>
        <shortName evidence="1">KAPA synthase</shortName>
    </alternativeName>
    <alternativeName>
        <fullName evidence="1">8-amino-7-ketopelargonate synthase</fullName>
    </alternativeName>
</protein>
<sequence length="391" mass="41821">MPLQLLSQRLEKTQHDGLYRSLRSVERTTPQVFVEGRQALLFCSNNYLGLAEHPSLAQAAADAALQYGTSSAASRLVSGNQPLHAMLEAKLSAWKGTETALLFNSGYAANTGIIAALAGRGDIIFSDRLNHASIIDGALLSGARLIRYPHNDTLALARLLEQHQTDGLRLIVTDGVFSMDGDIAPLQGIADLAEQHRALLMVDDAHAGGVLGQQGRGTVDFCGVTGRVAIQMGTFGKALGSFGAYAACSRLVRDYLINRSRSLIFSTSLPPAVLAASAAAVELVQAEEGQQLRQQLTDNSHLLRYLLQQAGYKVPDGCTPIVPVMVGEAETTTRFSTRLLEEGVFVQGIRPPTVPKGTSRLRCTVMASHSPDQIQQAVAAITRVGRELGVL</sequence>